<organism>
    <name type="scientific">Exiguobacterium sibiricum (strain DSM 17290 / CCUG 55495 / CIP 109462 / JCM 13490 / 255-15)</name>
    <dbReference type="NCBI Taxonomy" id="262543"/>
    <lineage>
        <taxon>Bacteria</taxon>
        <taxon>Bacillati</taxon>
        <taxon>Bacillota</taxon>
        <taxon>Bacilli</taxon>
        <taxon>Bacillales</taxon>
        <taxon>Bacillales Family XII. Incertae Sedis</taxon>
        <taxon>Exiguobacterium</taxon>
    </lineage>
</organism>
<accession>B1YKH4</accession>
<sequence length="801" mass="91651">MPYNHREIEPKWQARWEQDNAFVTTEDPEKEGFYALDMFPYPSGAGLHVGHPEGYTATDILARMKRMQGYNVLHPMGWDAFGLPAEQYALDTGNDPREFTAQNIETFKRQLKDLGFSYDWDREINTTDPKYYKWTQWIFTKLYEQGLAFVDEVAVNWCPALGTVLANEEVIDGLSERGNHPVVRVPMRQWVLKITEYADRLLEDLDELDWPESVKEMQRNWIGKSEGAEIDFTIDGHKKQVTVFTTRPDTVFGATYLVLAPEHPFVTDITTEDHEEAVKAYIASVQTKSDLERTDLAKEKTGVFTGAFAVNPISGERLPIWIADYVLATYGTGAIMAVPAHDERDHEFAKQFDLPIIEVVKGGNVDEVAYTGEGEHVNSQMLDGLSKQEAIETIIAELETNQVGRKKITFRLRDWLFSRQRYWGEPIPVVHMEDGTMKTLDKSELPLELPMIPEIKPSGTGESPLALAEDWLDYTDPVTGLKGRRETNTMPQWGGSCWYYLRFIDPHNEEAIADPEKLKYWLPVDIYIGGAEHAVLHLLYARFWHKVLYDIGVVPTKEPFQKLYNQGMILGENNEKMSKSRGNVINPDEIVKSHGADTLRLYEMFMGPLDASVSWSENGLDGARRFLDRVWRLFERTADIQDVTTVDADFERVYHQTVKKVTEDFTNIQFNTGISQLMVFVNEANKQPVLPRHFLRGFIQLLTPVAPHLGEELWEQLGFEDTLTYAAWPTFDETKLVSDTMEFVIQVNGKVRSKLVISMEATKEEIEALAFADEKTQEWIGDKTVRKVIVVPKKLINIVAN</sequence>
<feature type="chain" id="PRO_1000091318" description="Leucine--tRNA ligase">
    <location>
        <begin position="1"/>
        <end position="801"/>
    </location>
</feature>
<feature type="short sequence motif" description="'HIGH' region">
    <location>
        <begin position="40"/>
        <end position="51"/>
    </location>
</feature>
<feature type="short sequence motif" description="'KMSKS' region">
    <location>
        <begin position="576"/>
        <end position="580"/>
    </location>
</feature>
<feature type="binding site" evidence="1">
    <location>
        <position position="579"/>
    </location>
    <ligand>
        <name>ATP</name>
        <dbReference type="ChEBI" id="CHEBI:30616"/>
    </ligand>
</feature>
<reference key="1">
    <citation type="submission" date="2008-04" db="EMBL/GenBank/DDBJ databases">
        <title>Complete sequence of chromosome of Exiguobacterium sibiricum 255-15.</title>
        <authorList>
            <consortium name="US DOE Joint Genome Institute"/>
            <person name="Copeland A."/>
            <person name="Lucas S."/>
            <person name="Lapidus A."/>
            <person name="Glavina del Rio T."/>
            <person name="Dalin E."/>
            <person name="Tice H."/>
            <person name="Bruce D."/>
            <person name="Goodwin L."/>
            <person name="Pitluck S."/>
            <person name="Kiss H."/>
            <person name="Chertkov O."/>
            <person name="Monk C."/>
            <person name="Brettin T."/>
            <person name="Detter J.C."/>
            <person name="Han C."/>
            <person name="Kuske C.R."/>
            <person name="Schmutz J."/>
            <person name="Larimer F."/>
            <person name="Land M."/>
            <person name="Hauser L."/>
            <person name="Kyrpides N."/>
            <person name="Mikhailova N."/>
            <person name="Vishnivetskaya T."/>
            <person name="Rodrigues D.F."/>
            <person name="Gilichinsky D."/>
            <person name="Tiedje J."/>
            <person name="Richardson P."/>
        </authorList>
    </citation>
    <scope>NUCLEOTIDE SEQUENCE [LARGE SCALE GENOMIC DNA]</scope>
    <source>
        <strain>DSM 17290 / CCUG 55495 / CIP 109462 / JCM 13490 / 255-15</strain>
    </source>
</reference>
<name>SYL_EXIS2</name>
<keyword id="KW-0030">Aminoacyl-tRNA synthetase</keyword>
<keyword id="KW-0067">ATP-binding</keyword>
<keyword id="KW-0963">Cytoplasm</keyword>
<keyword id="KW-0436">Ligase</keyword>
<keyword id="KW-0547">Nucleotide-binding</keyword>
<keyword id="KW-0648">Protein biosynthesis</keyword>
<keyword id="KW-1185">Reference proteome</keyword>
<protein>
    <recommendedName>
        <fullName evidence="1">Leucine--tRNA ligase</fullName>
        <ecNumber evidence="1">6.1.1.4</ecNumber>
    </recommendedName>
    <alternativeName>
        <fullName evidence="1">Leucyl-tRNA synthetase</fullName>
        <shortName evidence="1">LeuRS</shortName>
    </alternativeName>
</protein>
<evidence type="ECO:0000255" key="1">
    <source>
        <dbReference type="HAMAP-Rule" id="MF_00049"/>
    </source>
</evidence>
<dbReference type="EC" id="6.1.1.4" evidence="1"/>
<dbReference type="EMBL" id="CP001022">
    <property type="protein sequence ID" value="ACB61727.1"/>
    <property type="molecule type" value="Genomic_DNA"/>
</dbReference>
<dbReference type="RefSeq" id="WP_012371144.1">
    <property type="nucleotide sequence ID" value="NC_010556.1"/>
</dbReference>
<dbReference type="SMR" id="B1YKH4"/>
<dbReference type="STRING" id="262543.Exig_2275"/>
<dbReference type="KEGG" id="esi:Exig_2275"/>
<dbReference type="eggNOG" id="COG0495">
    <property type="taxonomic scope" value="Bacteria"/>
</dbReference>
<dbReference type="HOGENOM" id="CLU_004427_0_0_9"/>
<dbReference type="OrthoDB" id="9810365at2"/>
<dbReference type="Proteomes" id="UP000001681">
    <property type="component" value="Chromosome"/>
</dbReference>
<dbReference type="GO" id="GO:0005829">
    <property type="term" value="C:cytosol"/>
    <property type="evidence" value="ECO:0007669"/>
    <property type="project" value="TreeGrafter"/>
</dbReference>
<dbReference type="GO" id="GO:0002161">
    <property type="term" value="F:aminoacyl-tRNA deacylase activity"/>
    <property type="evidence" value="ECO:0007669"/>
    <property type="project" value="InterPro"/>
</dbReference>
<dbReference type="GO" id="GO:0005524">
    <property type="term" value="F:ATP binding"/>
    <property type="evidence" value="ECO:0007669"/>
    <property type="project" value="UniProtKB-UniRule"/>
</dbReference>
<dbReference type="GO" id="GO:0004823">
    <property type="term" value="F:leucine-tRNA ligase activity"/>
    <property type="evidence" value="ECO:0007669"/>
    <property type="project" value="UniProtKB-UniRule"/>
</dbReference>
<dbReference type="GO" id="GO:0006429">
    <property type="term" value="P:leucyl-tRNA aminoacylation"/>
    <property type="evidence" value="ECO:0007669"/>
    <property type="project" value="UniProtKB-UniRule"/>
</dbReference>
<dbReference type="CDD" id="cd07958">
    <property type="entry name" value="Anticodon_Ia_Leu_BEm"/>
    <property type="match status" value="1"/>
</dbReference>
<dbReference type="CDD" id="cd00812">
    <property type="entry name" value="LeuRS_core"/>
    <property type="match status" value="1"/>
</dbReference>
<dbReference type="FunFam" id="3.10.20.590:FF:000001">
    <property type="entry name" value="Leucine--tRNA ligase"/>
    <property type="match status" value="1"/>
</dbReference>
<dbReference type="FunFam" id="3.40.50.620:FF:000056">
    <property type="entry name" value="Leucine--tRNA ligase"/>
    <property type="match status" value="1"/>
</dbReference>
<dbReference type="FunFam" id="3.40.50.620:FF:000077">
    <property type="entry name" value="Leucine--tRNA ligase"/>
    <property type="match status" value="1"/>
</dbReference>
<dbReference type="FunFam" id="1.10.730.10:FF:000011">
    <property type="entry name" value="Leucine--tRNA ligase chloroplastic/mitochondrial"/>
    <property type="match status" value="1"/>
</dbReference>
<dbReference type="Gene3D" id="3.10.20.590">
    <property type="match status" value="1"/>
</dbReference>
<dbReference type="Gene3D" id="3.40.50.620">
    <property type="entry name" value="HUPs"/>
    <property type="match status" value="2"/>
</dbReference>
<dbReference type="Gene3D" id="1.10.730.10">
    <property type="entry name" value="Isoleucyl-tRNA Synthetase, Domain 1"/>
    <property type="match status" value="1"/>
</dbReference>
<dbReference type="HAMAP" id="MF_00049_B">
    <property type="entry name" value="Leu_tRNA_synth_B"/>
    <property type="match status" value="1"/>
</dbReference>
<dbReference type="InterPro" id="IPR001412">
    <property type="entry name" value="aa-tRNA-synth_I_CS"/>
</dbReference>
<dbReference type="InterPro" id="IPR002300">
    <property type="entry name" value="aa-tRNA-synth_Ia"/>
</dbReference>
<dbReference type="InterPro" id="IPR002302">
    <property type="entry name" value="Leu-tRNA-ligase"/>
</dbReference>
<dbReference type="InterPro" id="IPR025709">
    <property type="entry name" value="Leu_tRNA-synth_edit"/>
</dbReference>
<dbReference type="InterPro" id="IPR013155">
    <property type="entry name" value="M/V/L/I-tRNA-synth_anticd-bd"/>
</dbReference>
<dbReference type="InterPro" id="IPR015413">
    <property type="entry name" value="Methionyl/Leucyl_tRNA_Synth"/>
</dbReference>
<dbReference type="InterPro" id="IPR014729">
    <property type="entry name" value="Rossmann-like_a/b/a_fold"/>
</dbReference>
<dbReference type="InterPro" id="IPR009080">
    <property type="entry name" value="tRNAsynth_Ia_anticodon-bd"/>
</dbReference>
<dbReference type="InterPro" id="IPR009008">
    <property type="entry name" value="Val/Leu/Ile-tRNA-synth_edit"/>
</dbReference>
<dbReference type="NCBIfam" id="TIGR00396">
    <property type="entry name" value="leuS_bact"/>
    <property type="match status" value="1"/>
</dbReference>
<dbReference type="PANTHER" id="PTHR43740:SF2">
    <property type="entry name" value="LEUCINE--TRNA LIGASE, MITOCHONDRIAL"/>
    <property type="match status" value="1"/>
</dbReference>
<dbReference type="PANTHER" id="PTHR43740">
    <property type="entry name" value="LEUCYL-TRNA SYNTHETASE"/>
    <property type="match status" value="1"/>
</dbReference>
<dbReference type="Pfam" id="PF08264">
    <property type="entry name" value="Anticodon_1"/>
    <property type="match status" value="1"/>
</dbReference>
<dbReference type="Pfam" id="PF00133">
    <property type="entry name" value="tRNA-synt_1"/>
    <property type="match status" value="1"/>
</dbReference>
<dbReference type="Pfam" id="PF13603">
    <property type="entry name" value="tRNA-synt_1_2"/>
    <property type="match status" value="1"/>
</dbReference>
<dbReference type="Pfam" id="PF09334">
    <property type="entry name" value="tRNA-synt_1g"/>
    <property type="match status" value="1"/>
</dbReference>
<dbReference type="PRINTS" id="PR00985">
    <property type="entry name" value="TRNASYNTHLEU"/>
</dbReference>
<dbReference type="SUPFAM" id="SSF47323">
    <property type="entry name" value="Anticodon-binding domain of a subclass of class I aminoacyl-tRNA synthetases"/>
    <property type="match status" value="1"/>
</dbReference>
<dbReference type="SUPFAM" id="SSF52374">
    <property type="entry name" value="Nucleotidylyl transferase"/>
    <property type="match status" value="1"/>
</dbReference>
<dbReference type="SUPFAM" id="SSF50677">
    <property type="entry name" value="ValRS/IleRS/LeuRS editing domain"/>
    <property type="match status" value="1"/>
</dbReference>
<dbReference type="PROSITE" id="PS00178">
    <property type="entry name" value="AA_TRNA_LIGASE_I"/>
    <property type="match status" value="1"/>
</dbReference>
<proteinExistence type="inferred from homology"/>
<comment type="catalytic activity">
    <reaction evidence="1">
        <text>tRNA(Leu) + L-leucine + ATP = L-leucyl-tRNA(Leu) + AMP + diphosphate</text>
        <dbReference type="Rhea" id="RHEA:11688"/>
        <dbReference type="Rhea" id="RHEA-COMP:9613"/>
        <dbReference type="Rhea" id="RHEA-COMP:9622"/>
        <dbReference type="ChEBI" id="CHEBI:30616"/>
        <dbReference type="ChEBI" id="CHEBI:33019"/>
        <dbReference type="ChEBI" id="CHEBI:57427"/>
        <dbReference type="ChEBI" id="CHEBI:78442"/>
        <dbReference type="ChEBI" id="CHEBI:78494"/>
        <dbReference type="ChEBI" id="CHEBI:456215"/>
        <dbReference type="EC" id="6.1.1.4"/>
    </reaction>
</comment>
<comment type="subcellular location">
    <subcellularLocation>
        <location evidence="1">Cytoplasm</location>
    </subcellularLocation>
</comment>
<comment type="similarity">
    <text evidence="1">Belongs to the class-I aminoacyl-tRNA synthetase family.</text>
</comment>
<gene>
    <name evidence="1" type="primary">leuS</name>
    <name type="ordered locus">Exig_2275</name>
</gene>